<comment type="function">
    <text evidence="1">Required for accurate and efficient protein synthesis under certain stress conditions. May act as a fidelity factor of the translation reaction, by catalyzing a one-codon backward translocation of tRNAs on improperly translocated ribosomes. Back-translocation proceeds from a post-translocation (POST) complex to a pre-translocation (PRE) complex, thus giving elongation factor G a second chance to translocate the tRNAs correctly. Binds to ribosomes in a GTP-dependent manner.</text>
</comment>
<comment type="catalytic activity">
    <reaction evidence="1">
        <text>GTP + H2O = GDP + phosphate + H(+)</text>
        <dbReference type="Rhea" id="RHEA:19669"/>
        <dbReference type="ChEBI" id="CHEBI:15377"/>
        <dbReference type="ChEBI" id="CHEBI:15378"/>
        <dbReference type="ChEBI" id="CHEBI:37565"/>
        <dbReference type="ChEBI" id="CHEBI:43474"/>
        <dbReference type="ChEBI" id="CHEBI:58189"/>
        <dbReference type="EC" id="3.6.5.n1"/>
    </reaction>
</comment>
<comment type="subcellular location">
    <subcellularLocation>
        <location evidence="1">Cell inner membrane</location>
        <topology evidence="1">Peripheral membrane protein</topology>
        <orientation evidence="1">Cytoplasmic side</orientation>
    </subcellularLocation>
</comment>
<comment type="similarity">
    <text evidence="1">Belongs to the TRAFAC class translation factor GTPase superfamily. Classic translation factor GTPase family. LepA subfamily.</text>
</comment>
<name>LEPA_ECOK1</name>
<accession>A1AE99</accession>
<feature type="chain" id="PRO_1000031993" description="Elongation factor 4">
    <location>
        <begin position="1"/>
        <end position="599"/>
    </location>
</feature>
<feature type="domain" description="tr-type G">
    <location>
        <begin position="2"/>
        <end position="184"/>
    </location>
</feature>
<feature type="binding site" evidence="1">
    <location>
        <begin position="14"/>
        <end position="19"/>
    </location>
    <ligand>
        <name>GTP</name>
        <dbReference type="ChEBI" id="CHEBI:37565"/>
    </ligand>
</feature>
<feature type="binding site" evidence="1">
    <location>
        <begin position="131"/>
        <end position="134"/>
    </location>
    <ligand>
        <name>GTP</name>
        <dbReference type="ChEBI" id="CHEBI:37565"/>
    </ligand>
</feature>
<protein>
    <recommendedName>
        <fullName evidence="1">Elongation factor 4</fullName>
        <shortName evidence="1">EF-4</shortName>
        <ecNumber evidence="1">3.6.5.n1</ecNumber>
    </recommendedName>
    <alternativeName>
        <fullName evidence="1">Ribosomal back-translocase LepA</fullName>
    </alternativeName>
</protein>
<evidence type="ECO:0000255" key="1">
    <source>
        <dbReference type="HAMAP-Rule" id="MF_00071"/>
    </source>
</evidence>
<organism>
    <name type="scientific">Escherichia coli O1:K1 / APEC</name>
    <dbReference type="NCBI Taxonomy" id="405955"/>
    <lineage>
        <taxon>Bacteria</taxon>
        <taxon>Pseudomonadati</taxon>
        <taxon>Pseudomonadota</taxon>
        <taxon>Gammaproteobacteria</taxon>
        <taxon>Enterobacterales</taxon>
        <taxon>Enterobacteriaceae</taxon>
        <taxon>Escherichia</taxon>
    </lineage>
</organism>
<dbReference type="EC" id="3.6.5.n1" evidence="1"/>
<dbReference type="EMBL" id="CP000468">
    <property type="protein sequence ID" value="ABJ01989.1"/>
    <property type="molecule type" value="Genomic_DNA"/>
</dbReference>
<dbReference type="RefSeq" id="WP_000790169.1">
    <property type="nucleotide sequence ID" value="NZ_CADILS010000012.1"/>
</dbReference>
<dbReference type="SMR" id="A1AE99"/>
<dbReference type="KEGG" id="ecv:APECO1_3962"/>
<dbReference type="HOGENOM" id="CLU_009995_3_3_6"/>
<dbReference type="Proteomes" id="UP000008216">
    <property type="component" value="Chromosome"/>
</dbReference>
<dbReference type="GO" id="GO:0005886">
    <property type="term" value="C:plasma membrane"/>
    <property type="evidence" value="ECO:0007669"/>
    <property type="project" value="UniProtKB-SubCell"/>
</dbReference>
<dbReference type="GO" id="GO:0005525">
    <property type="term" value="F:GTP binding"/>
    <property type="evidence" value="ECO:0007669"/>
    <property type="project" value="UniProtKB-UniRule"/>
</dbReference>
<dbReference type="GO" id="GO:0003924">
    <property type="term" value="F:GTPase activity"/>
    <property type="evidence" value="ECO:0007669"/>
    <property type="project" value="UniProtKB-UniRule"/>
</dbReference>
<dbReference type="GO" id="GO:0097216">
    <property type="term" value="F:guanosine tetraphosphate binding"/>
    <property type="evidence" value="ECO:0007669"/>
    <property type="project" value="UniProtKB-ARBA"/>
</dbReference>
<dbReference type="GO" id="GO:0043022">
    <property type="term" value="F:ribosome binding"/>
    <property type="evidence" value="ECO:0007669"/>
    <property type="project" value="UniProtKB-UniRule"/>
</dbReference>
<dbReference type="GO" id="GO:0003746">
    <property type="term" value="F:translation elongation factor activity"/>
    <property type="evidence" value="ECO:0007669"/>
    <property type="project" value="UniProtKB-UniRule"/>
</dbReference>
<dbReference type="GO" id="GO:0045727">
    <property type="term" value="P:positive regulation of translation"/>
    <property type="evidence" value="ECO:0007669"/>
    <property type="project" value="UniProtKB-UniRule"/>
</dbReference>
<dbReference type="CDD" id="cd03699">
    <property type="entry name" value="EF4_II"/>
    <property type="match status" value="1"/>
</dbReference>
<dbReference type="CDD" id="cd16260">
    <property type="entry name" value="EF4_III"/>
    <property type="match status" value="1"/>
</dbReference>
<dbReference type="CDD" id="cd01890">
    <property type="entry name" value="LepA"/>
    <property type="match status" value="1"/>
</dbReference>
<dbReference type="CDD" id="cd03709">
    <property type="entry name" value="lepA_C"/>
    <property type="match status" value="1"/>
</dbReference>
<dbReference type="FunFam" id="3.30.70.240:FF:000005">
    <property type="entry name" value="Elongation factor 4"/>
    <property type="match status" value="1"/>
</dbReference>
<dbReference type="FunFam" id="3.40.50.300:FF:000078">
    <property type="entry name" value="Elongation factor 4"/>
    <property type="match status" value="1"/>
</dbReference>
<dbReference type="FunFam" id="2.40.30.10:FF:000015">
    <property type="entry name" value="Translation factor GUF1, mitochondrial"/>
    <property type="match status" value="1"/>
</dbReference>
<dbReference type="FunFam" id="3.30.70.2570:FF:000001">
    <property type="entry name" value="Translation factor GUF1, mitochondrial"/>
    <property type="match status" value="1"/>
</dbReference>
<dbReference type="FunFam" id="3.30.70.870:FF:000004">
    <property type="entry name" value="Translation factor GUF1, mitochondrial"/>
    <property type="match status" value="1"/>
</dbReference>
<dbReference type="Gene3D" id="3.30.70.240">
    <property type="match status" value="1"/>
</dbReference>
<dbReference type="Gene3D" id="3.30.70.2570">
    <property type="entry name" value="Elongation factor 4, C-terminal domain"/>
    <property type="match status" value="1"/>
</dbReference>
<dbReference type="Gene3D" id="3.30.70.870">
    <property type="entry name" value="Elongation Factor G (Translational Gtpase), domain 3"/>
    <property type="match status" value="1"/>
</dbReference>
<dbReference type="Gene3D" id="3.40.50.300">
    <property type="entry name" value="P-loop containing nucleotide triphosphate hydrolases"/>
    <property type="match status" value="1"/>
</dbReference>
<dbReference type="Gene3D" id="2.40.30.10">
    <property type="entry name" value="Translation factors"/>
    <property type="match status" value="1"/>
</dbReference>
<dbReference type="HAMAP" id="MF_00071">
    <property type="entry name" value="LepA"/>
    <property type="match status" value="1"/>
</dbReference>
<dbReference type="InterPro" id="IPR006297">
    <property type="entry name" value="EF-4"/>
</dbReference>
<dbReference type="InterPro" id="IPR035647">
    <property type="entry name" value="EFG_III/V"/>
</dbReference>
<dbReference type="InterPro" id="IPR000640">
    <property type="entry name" value="EFG_V-like"/>
</dbReference>
<dbReference type="InterPro" id="IPR004161">
    <property type="entry name" value="EFTu-like_2"/>
</dbReference>
<dbReference type="InterPro" id="IPR031157">
    <property type="entry name" value="G_TR_CS"/>
</dbReference>
<dbReference type="InterPro" id="IPR038363">
    <property type="entry name" value="LepA_C_sf"/>
</dbReference>
<dbReference type="InterPro" id="IPR013842">
    <property type="entry name" value="LepA_CTD"/>
</dbReference>
<dbReference type="InterPro" id="IPR035654">
    <property type="entry name" value="LepA_IV"/>
</dbReference>
<dbReference type="InterPro" id="IPR027417">
    <property type="entry name" value="P-loop_NTPase"/>
</dbReference>
<dbReference type="InterPro" id="IPR005225">
    <property type="entry name" value="Small_GTP-bd"/>
</dbReference>
<dbReference type="InterPro" id="IPR000795">
    <property type="entry name" value="T_Tr_GTP-bd_dom"/>
</dbReference>
<dbReference type="NCBIfam" id="TIGR01393">
    <property type="entry name" value="lepA"/>
    <property type="match status" value="1"/>
</dbReference>
<dbReference type="NCBIfam" id="TIGR00231">
    <property type="entry name" value="small_GTP"/>
    <property type="match status" value="1"/>
</dbReference>
<dbReference type="PANTHER" id="PTHR43512:SF4">
    <property type="entry name" value="TRANSLATION FACTOR GUF1 HOMOLOG, CHLOROPLASTIC"/>
    <property type="match status" value="1"/>
</dbReference>
<dbReference type="PANTHER" id="PTHR43512">
    <property type="entry name" value="TRANSLATION FACTOR GUF1-RELATED"/>
    <property type="match status" value="1"/>
</dbReference>
<dbReference type="Pfam" id="PF00679">
    <property type="entry name" value="EFG_C"/>
    <property type="match status" value="1"/>
</dbReference>
<dbReference type="Pfam" id="PF00009">
    <property type="entry name" value="GTP_EFTU"/>
    <property type="match status" value="1"/>
</dbReference>
<dbReference type="Pfam" id="PF03144">
    <property type="entry name" value="GTP_EFTU_D2"/>
    <property type="match status" value="1"/>
</dbReference>
<dbReference type="Pfam" id="PF06421">
    <property type="entry name" value="LepA_C"/>
    <property type="match status" value="1"/>
</dbReference>
<dbReference type="PRINTS" id="PR00315">
    <property type="entry name" value="ELONGATNFCT"/>
</dbReference>
<dbReference type="SUPFAM" id="SSF54980">
    <property type="entry name" value="EF-G C-terminal domain-like"/>
    <property type="match status" value="2"/>
</dbReference>
<dbReference type="SUPFAM" id="SSF52540">
    <property type="entry name" value="P-loop containing nucleoside triphosphate hydrolases"/>
    <property type="match status" value="1"/>
</dbReference>
<dbReference type="PROSITE" id="PS00301">
    <property type="entry name" value="G_TR_1"/>
    <property type="match status" value="1"/>
</dbReference>
<dbReference type="PROSITE" id="PS51722">
    <property type="entry name" value="G_TR_2"/>
    <property type="match status" value="1"/>
</dbReference>
<gene>
    <name evidence="1" type="primary">lepA</name>
    <name type="ordered locus">Ecok1_24950</name>
    <name type="ORF">APECO1_3962</name>
</gene>
<reference key="1">
    <citation type="journal article" date="2007" name="J. Bacteriol.">
        <title>The genome sequence of avian pathogenic Escherichia coli strain O1:K1:H7 shares strong similarities with human extraintestinal pathogenic E. coli genomes.</title>
        <authorList>
            <person name="Johnson T.J."/>
            <person name="Kariyawasam S."/>
            <person name="Wannemuehler Y."/>
            <person name="Mangiamele P."/>
            <person name="Johnson S.J."/>
            <person name="Doetkott C."/>
            <person name="Skyberg J.A."/>
            <person name="Lynne A.M."/>
            <person name="Johnson J.R."/>
            <person name="Nolan L.K."/>
        </authorList>
    </citation>
    <scope>NUCLEOTIDE SEQUENCE [LARGE SCALE GENOMIC DNA]</scope>
</reference>
<sequence>MKNIRNFSIIAHIDHGKSTLSDRIIQICGGLSDREMEAQVLDSMDLERERGITIKAQSVTLDYKASDGETYQLNFIDTPGHVDFSYEVSRSLAACEGALLVVDAGQGVEAQTLANCYTAMEMDLEVVPVLNKIDLPAADPERVAEEIEDIVGIDATDAVRCSAKTGVGVQDVLERLVRDIPPPEGDPEGPLQALIIDSWFDNYLGVVSLIRIKNGTLRKGDKVKVMSTGQTYNADRLGIFTPKQVDRTELKCGEVGWLVCAIKDIHGAPVGDTLTLARNPAEKALPGFKKVKPQVYAGLFPVSSDDYEAFRDALGKLSLNDASLFYEPESSSALGFGFRCGFLGLLHMEIIQERLEREYDLDLITTAPTVVYEVETTSREVIYVDSPSKLPAVNNIYELREPIAECHMLLPQAYLGNVITLCVEKRGVQTNMVYHGNQVALTYEIPMAEVVLDFFDRLKSTSRGYASLDYNFKRFQASDMVRVDVLINGERVDALALITHRGNSQNRGRELVEKMKDLIPRQQFDIAIQAAIGTHIIARSTVKQLRKNVLAKCYGGDISRKKKLLQKQKEGKKRMKQIGNVELPQEAFLAILHVGKDNK</sequence>
<keyword id="KW-0997">Cell inner membrane</keyword>
<keyword id="KW-1003">Cell membrane</keyword>
<keyword id="KW-0342">GTP-binding</keyword>
<keyword id="KW-0378">Hydrolase</keyword>
<keyword id="KW-0472">Membrane</keyword>
<keyword id="KW-0547">Nucleotide-binding</keyword>
<keyword id="KW-0648">Protein biosynthesis</keyword>
<keyword id="KW-1185">Reference proteome</keyword>
<proteinExistence type="inferred from homology"/>